<gene>
    <name evidence="2" type="primary">gshAB</name>
    <name evidence="2" type="synonym">gshF</name>
    <name type="ordered locus">lmo2770</name>
</gene>
<keyword id="KW-0067">ATP-binding</keyword>
<keyword id="KW-0317">Glutathione biosynthesis</keyword>
<keyword id="KW-0436">Ligase</keyword>
<keyword id="KW-0460">Magnesium</keyword>
<keyword id="KW-0464">Manganese</keyword>
<keyword id="KW-0479">Metal-binding</keyword>
<keyword id="KW-0511">Multifunctional enzyme</keyword>
<keyword id="KW-0547">Nucleotide-binding</keyword>
<keyword id="KW-1185">Reference proteome</keyword>
<feature type="chain" id="PRO_0000192555" description="Glutathione biosynthesis bifunctional protein GshAB">
    <location>
        <begin position="1"/>
        <end position="769"/>
    </location>
</feature>
<feature type="domain" description="ATP-grasp" evidence="2">
    <location>
        <begin position="514"/>
        <end position="768"/>
    </location>
</feature>
<feature type="region of interest" description="Glutamate--cysteine ligase">
    <location>
        <begin position="1"/>
        <end position="347"/>
    </location>
</feature>
<feature type="binding site" evidence="2">
    <location>
        <begin position="541"/>
        <end position="599"/>
    </location>
    <ligand>
        <name>ATP</name>
        <dbReference type="ChEBI" id="CHEBI:30616"/>
    </ligand>
</feature>
<feature type="binding site" evidence="2">
    <location>
        <position position="721"/>
    </location>
    <ligand>
        <name>Mg(2+)</name>
        <dbReference type="ChEBI" id="CHEBI:18420"/>
        <label>1</label>
    </ligand>
</feature>
<feature type="binding site" evidence="2">
    <location>
        <position position="721"/>
    </location>
    <ligand>
        <name>Mn(2+)</name>
        <dbReference type="ChEBI" id="CHEBI:29035"/>
        <label>1</label>
    </ligand>
</feature>
<feature type="binding site" evidence="2">
    <location>
        <position position="738"/>
    </location>
    <ligand>
        <name>Mg(2+)</name>
        <dbReference type="ChEBI" id="CHEBI:18420"/>
        <label>1</label>
    </ligand>
</feature>
<feature type="binding site" evidence="2">
    <location>
        <position position="738"/>
    </location>
    <ligand>
        <name>Mg(2+)</name>
        <dbReference type="ChEBI" id="CHEBI:18420"/>
        <label>2</label>
    </ligand>
</feature>
<feature type="binding site" evidence="2">
    <location>
        <position position="738"/>
    </location>
    <ligand>
        <name>Mn(2+)</name>
        <dbReference type="ChEBI" id="CHEBI:29035"/>
        <label>1</label>
    </ligand>
</feature>
<feature type="binding site" evidence="2">
    <location>
        <position position="738"/>
    </location>
    <ligand>
        <name>Mn(2+)</name>
        <dbReference type="ChEBI" id="CHEBI:29035"/>
        <label>2</label>
    </ligand>
</feature>
<feature type="binding site" evidence="2">
    <location>
        <position position="740"/>
    </location>
    <ligand>
        <name>Mg(2+)</name>
        <dbReference type="ChEBI" id="CHEBI:18420"/>
        <label>2</label>
    </ligand>
</feature>
<feature type="binding site" evidence="2">
    <location>
        <position position="740"/>
    </location>
    <ligand>
        <name>Mn(2+)</name>
        <dbReference type="ChEBI" id="CHEBI:29035"/>
        <label>2</label>
    </ligand>
</feature>
<proteinExistence type="evidence at protein level"/>
<comment type="function">
    <text>Synthesizes glutathione from L-glutamate and L-cysteine via gamma-L-glutamyl-L-cysteine.</text>
</comment>
<comment type="catalytic activity">
    <reaction evidence="2">
        <text>L-cysteine + L-glutamate + ATP = gamma-L-glutamyl-L-cysteine + ADP + phosphate + H(+)</text>
        <dbReference type="Rhea" id="RHEA:13285"/>
        <dbReference type="ChEBI" id="CHEBI:15378"/>
        <dbReference type="ChEBI" id="CHEBI:29985"/>
        <dbReference type="ChEBI" id="CHEBI:30616"/>
        <dbReference type="ChEBI" id="CHEBI:35235"/>
        <dbReference type="ChEBI" id="CHEBI:43474"/>
        <dbReference type="ChEBI" id="CHEBI:58173"/>
        <dbReference type="ChEBI" id="CHEBI:456216"/>
        <dbReference type="EC" id="6.3.2.2"/>
    </reaction>
</comment>
<comment type="catalytic activity">
    <reaction evidence="2">
        <text>gamma-L-glutamyl-L-cysteine + glycine + ATP = glutathione + ADP + phosphate + H(+)</text>
        <dbReference type="Rhea" id="RHEA:13557"/>
        <dbReference type="ChEBI" id="CHEBI:15378"/>
        <dbReference type="ChEBI" id="CHEBI:30616"/>
        <dbReference type="ChEBI" id="CHEBI:43474"/>
        <dbReference type="ChEBI" id="CHEBI:57305"/>
        <dbReference type="ChEBI" id="CHEBI:57925"/>
        <dbReference type="ChEBI" id="CHEBI:58173"/>
        <dbReference type="ChEBI" id="CHEBI:456216"/>
        <dbReference type="EC" id="6.3.2.3"/>
    </reaction>
</comment>
<comment type="cofactor">
    <cofactor evidence="1">
        <name>Mg(2+)</name>
        <dbReference type="ChEBI" id="CHEBI:18420"/>
    </cofactor>
    <cofactor evidence="1">
        <name>Mn(2+)</name>
        <dbReference type="ChEBI" id="CHEBI:29035"/>
    </cofactor>
    <text evidence="1">Binds 2 magnesium or manganese ions per subunit.</text>
</comment>
<comment type="pathway">
    <text evidence="2">Sulfur metabolism; glutathione biosynthesis; glutathione from L-cysteine and L-glutamate: step 1/2.</text>
</comment>
<comment type="pathway">
    <text evidence="2">Sulfur metabolism; glutathione biosynthesis; glutathione from L-cysteine and L-glutamate: step 2/2.</text>
</comment>
<comment type="subunit">
    <text evidence="2">Monomer.</text>
</comment>
<comment type="similarity">
    <text evidence="2">In the N-terminal section; belongs to the glutamate--cysteine ligase type 1 family. Type 2 subfamily.</text>
</comment>
<comment type="sequence caution" evidence="3">
    <conflict type="erroneous initiation">
        <sequence resource="EMBL-CDS" id="CAD00983"/>
    </conflict>
</comment>
<evidence type="ECO:0000250" key="1"/>
<evidence type="ECO:0000255" key="2">
    <source>
        <dbReference type="HAMAP-Rule" id="MF_00782"/>
    </source>
</evidence>
<evidence type="ECO:0000305" key="3"/>
<protein>
    <recommendedName>
        <fullName evidence="2">Glutathione biosynthesis bifunctional protein GshAB</fullName>
    </recommendedName>
    <alternativeName>
        <fullName evidence="2">Gamma-GCS-GS</fullName>
        <shortName evidence="2">GCS-GS</shortName>
    </alternativeName>
    <domain>
        <recommendedName>
            <fullName evidence="2">Glutamate--cysteine ligase</fullName>
            <ecNumber evidence="2">6.3.2.2</ecNumber>
        </recommendedName>
        <alternativeName>
            <fullName evidence="2">Gamma-ECS</fullName>
            <shortName evidence="2">GCS</shortName>
        </alternativeName>
        <alternativeName>
            <fullName evidence="2">Gamma-glutamylcysteine synthetase</fullName>
        </alternativeName>
    </domain>
    <domain>
        <recommendedName>
            <fullName evidence="2">Glutathione synthetase</fullName>
            <ecNumber evidence="2">6.3.2.3</ecNumber>
        </recommendedName>
        <alternativeName>
            <fullName evidence="2">GSH synthetase</fullName>
            <shortName evidence="2">GS</shortName>
            <shortName evidence="2">GSH-S</shortName>
            <shortName evidence="2">GSHase</shortName>
        </alternativeName>
        <alternativeName>
            <fullName evidence="2">Glutathione synthase</fullName>
        </alternativeName>
    </domain>
</protein>
<sequence length="769" mass="87728">MLDSFKEDPNLRKLLFSGHFGLEKENIRVTSDGKLALTPHPAIFGPKEDNPYIKTDFSESQIEMITPVTDSIDSVYEWLENLHNIVSLRSENELLWPSSNPPILPAEEDIPIAEYKTPDSPDRKYREHLAKGYGKKIQLLSGIHYNFSFPEALIDGLYANISLPEESKQDFKNRLYLKVAKYFMKNRWLLIYLTGASPVYLADFSKTKHEESLPDGSSALRDGISLRNSNAGYKNKEALFVDYNSFDAYISSISNYIEAGKIESMREFYNPIRLKNAHTDQTVESLAEHGVEYLEIRSIDLNPLEPNGISKDELDFIHLFLIKGLLSEDRELCANNQQLADENENNIALNGLAQPSIKNCDNEDIPLADAGLLELDKMSDFIKSLRPEDTKLRAIIEKQKERLLHPEKTIAAQVKQQVTKEGYVDFHLNQAKTYMEETEALAYKLIGAEDMELSTQIIWKDAIARGIKVDVLDRAENFLRFQKGDHIEYVKQASKTSKDNYVSVLMMENKVVTKLVLAEHDIRVPFGDSFSDQALALEAFSLFEDKQIVVKPKSTNYGWGISIFKNKFTLEDYQEALNIAFSYDSSVIIEEFIPGDEFRFLVINDKVEAVLKRVPANVTGDGIHTVRELVEEKNTDPLRGTDHLKPLEKIRTGPEETLMLSMQNLSWDSIPKAEEIIYLRENSNVSTGGDSIDYTEEMDDYFKEIAIRATQVLDAKICGVDIIVPRETIDRDKHAIIELNFNPAMHMHCFPYQGEQKKIGDKILDFLFD</sequence>
<name>GSHAB_LISMO</name>
<dbReference type="EC" id="6.3.2.2" evidence="2"/>
<dbReference type="EC" id="6.3.2.3" evidence="2"/>
<dbReference type="EMBL" id="AL591984">
    <property type="protein sequence ID" value="CAD00983.1"/>
    <property type="status" value="ALT_INIT"/>
    <property type="molecule type" value="Genomic_DNA"/>
</dbReference>
<dbReference type="PIR" id="AI1420">
    <property type="entry name" value="AI1420"/>
</dbReference>
<dbReference type="RefSeq" id="NP_466292.1">
    <property type="nucleotide sequence ID" value="NC_003210.1"/>
</dbReference>
<dbReference type="SMR" id="Q8Y3R3"/>
<dbReference type="STRING" id="169963.gene:17595487"/>
<dbReference type="PaxDb" id="169963-lmo2770"/>
<dbReference type="EnsemblBacteria" id="CAD00983">
    <property type="protein sequence ID" value="CAD00983"/>
    <property type="gene ID" value="CAD00983"/>
</dbReference>
<dbReference type="GeneID" id="986798"/>
<dbReference type="KEGG" id="lmo:lmo2770"/>
<dbReference type="PATRIC" id="fig|169963.11.peg.2839"/>
<dbReference type="eggNOG" id="COG0189">
    <property type="taxonomic scope" value="Bacteria"/>
</dbReference>
<dbReference type="eggNOG" id="COG1181">
    <property type="taxonomic scope" value="Bacteria"/>
</dbReference>
<dbReference type="eggNOG" id="COG2918">
    <property type="taxonomic scope" value="Bacteria"/>
</dbReference>
<dbReference type="HOGENOM" id="CLU_020728_1_0_9"/>
<dbReference type="OrthoDB" id="9803907at2"/>
<dbReference type="PhylomeDB" id="Q8Y3R3"/>
<dbReference type="UniPathway" id="UPA00142">
    <property type="reaction ID" value="UER00209"/>
</dbReference>
<dbReference type="UniPathway" id="UPA00142">
    <property type="reaction ID" value="UER00210"/>
</dbReference>
<dbReference type="Proteomes" id="UP000000817">
    <property type="component" value="Chromosome"/>
</dbReference>
<dbReference type="GO" id="GO:0005829">
    <property type="term" value="C:cytosol"/>
    <property type="evidence" value="ECO:0000318"/>
    <property type="project" value="GO_Central"/>
</dbReference>
<dbReference type="GO" id="GO:0005524">
    <property type="term" value="F:ATP binding"/>
    <property type="evidence" value="ECO:0007669"/>
    <property type="project" value="UniProtKB-UniRule"/>
</dbReference>
<dbReference type="GO" id="GO:0004357">
    <property type="term" value="F:glutamate-cysteine ligase activity"/>
    <property type="evidence" value="ECO:0000318"/>
    <property type="project" value="GO_Central"/>
</dbReference>
<dbReference type="GO" id="GO:0004363">
    <property type="term" value="F:glutathione synthase activity"/>
    <property type="evidence" value="ECO:0007669"/>
    <property type="project" value="UniProtKB-UniRule"/>
</dbReference>
<dbReference type="GO" id="GO:0046872">
    <property type="term" value="F:metal ion binding"/>
    <property type="evidence" value="ECO:0000318"/>
    <property type="project" value="GO_Central"/>
</dbReference>
<dbReference type="GO" id="GO:0006750">
    <property type="term" value="P:glutathione biosynthetic process"/>
    <property type="evidence" value="ECO:0000318"/>
    <property type="project" value="GO_Central"/>
</dbReference>
<dbReference type="FunFam" id="3.30.470.20:FF:000077">
    <property type="entry name" value="Glutathione biosynthesis bifunctional protein GshAB"/>
    <property type="match status" value="1"/>
</dbReference>
<dbReference type="FunFam" id="3.30.590.20:FF:000011">
    <property type="entry name" value="Glutathione biosynthesis bifunctional protein GshAB"/>
    <property type="match status" value="1"/>
</dbReference>
<dbReference type="Gene3D" id="3.30.590.20">
    <property type="match status" value="1"/>
</dbReference>
<dbReference type="Gene3D" id="3.30.470.20">
    <property type="entry name" value="ATP-grasp fold, B domain"/>
    <property type="match status" value="2"/>
</dbReference>
<dbReference type="HAMAP" id="MF_00782">
    <property type="entry name" value="Glut_biosynth"/>
    <property type="match status" value="1"/>
</dbReference>
<dbReference type="InterPro" id="IPR011761">
    <property type="entry name" value="ATP-grasp"/>
</dbReference>
<dbReference type="InterPro" id="IPR014746">
    <property type="entry name" value="Gln_synth/guanido_kin_cat_dom"/>
</dbReference>
<dbReference type="InterPro" id="IPR007370">
    <property type="entry name" value="Glu_cys_ligase"/>
</dbReference>
<dbReference type="InterPro" id="IPR006335">
    <property type="entry name" value="Glut_biosynth"/>
</dbReference>
<dbReference type="InterPro" id="IPR006334">
    <property type="entry name" value="Glut_cys_ligase"/>
</dbReference>
<dbReference type="InterPro" id="IPR040657">
    <property type="entry name" value="GshAB_ATP-grasp"/>
</dbReference>
<dbReference type="InterPro" id="IPR020561">
    <property type="entry name" value="PRibGlycinamid_synth_ATP-grasp"/>
</dbReference>
<dbReference type="NCBIfam" id="TIGR01435">
    <property type="entry name" value="glu_cys_lig_rel"/>
    <property type="match status" value="1"/>
</dbReference>
<dbReference type="NCBIfam" id="NF002688">
    <property type="entry name" value="PRK02471.1"/>
    <property type="match status" value="1"/>
</dbReference>
<dbReference type="PANTHER" id="PTHR38761">
    <property type="entry name" value="GLUTAMATE--CYSTEINE LIGASE"/>
    <property type="match status" value="1"/>
</dbReference>
<dbReference type="PANTHER" id="PTHR38761:SF1">
    <property type="entry name" value="GLUTAMATE--CYSTEINE LIGASE"/>
    <property type="match status" value="1"/>
</dbReference>
<dbReference type="Pfam" id="PF18419">
    <property type="entry name" value="ATP-grasp_6"/>
    <property type="match status" value="1"/>
</dbReference>
<dbReference type="Pfam" id="PF01071">
    <property type="entry name" value="GARS_A"/>
    <property type="match status" value="1"/>
</dbReference>
<dbReference type="Pfam" id="PF04262">
    <property type="entry name" value="Glu_cys_ligase"/>
    <property type="match status" value="2"/>
</dbReference>
<dbReference type="SUPFAM" id="SSF55931">
    <property type="entry name" value="Glutamine synthetase/guanido kinase"/>
    <property type="match status" value="1"/>
</dbReference>
<dbReference type="SUPFAM" id="SSF56059">
    <property type="entry name" value="Glutathione synthetase ATP-binding domain-like"/>
    <property type="match status" value="1"/>
</dbReference>
<dbReference type="PROSITE" id="PS50975">
    <property type="entry name" value="ATP_GRASP"/>
    <property type="match status" value="1"/>
</dbReference>
<organism>
    <name type="scientific">Listeria monocytogenes serovar 1/2a (strain ATCC BAA-679 / EGD-e)</name>
    <dbReference type="NCBI Taxonomy" id="169963"/>
    <lineage>
        <taxon>Bacteria</taxon>
        <taxon>Bacillati</taxon>
        <taxon>Bacillota</taxon>
        <taxon>Bacilli</taxon>
        <taxon>Bacillales</taxon>
        <taxon>Listeriaceae</taxon>
        <taxon>Listeria</taxon>
    </lineage>
</organism>
<reference key="1">
    <citation type="journal article" date="2001" name="Science">
        <title>Comparative genomics of Listeria species.</title>
        <authorList>
            <person name="Glaser P."/>
            <person name="Frangeul L."/>
            <person name="Buchrieser C."/>
            <person name="Rusniok C."/>
            <person name="Amend A."/>
            <person name="Baquero F."/>
            <person name="Berche P."/>
            <person name="Bloecker H."/>
            <person name="Brandt P."/>
            <person name="Chakraborty T."/>
            <person name="Charbit A."/>
            <person name="Chetouani F."/>
            <person name="Couve E."/>
            <person name="de Daruvar A."/>
            <person name="Dehoux P."/>
            <person name="Domann E."/>
            <person name="Dominguez-Bernal G."/>
            <person name="Duchaud E."/>
            <person name="Durant L."/>
            <person name="Dussurget O."/>
            <person name="Entian K.-D."/>
            <person name="Fsihi H."/>
            <person name="Garcia-del Portillo F."/>
            <person name="Garrido P."/>
            <person name="Gautier L."/>
            <person name="Goebel W."/>
            <person name="Gomez-Lopez N."/>
            <person name="Hain T."/>
            <person name="Hauf J."/>
            <person name="Jackson D."/>
            <person name="Jones L.-M."/>
            <person name="Kaerst U."/>
            <person name="Kreft J."/>
            <person name="Kuhn M."/>
            <person name="Kunst F."/>
            <person name="Kurapkat G."/>
            <person name="Madueno E."/>
            <person name="Maitournam A."/>
            <person name="Mata Vicente J."/>
            <person name="Ng E."/>
            <person name="Nedjari H."/>
            <person name="Nordsiek G."/>
            <person name="Novella S."/>
            <person name="de Pablos B."/>
            <person name="Perez-Diaz J.-C."/>
            <person name="Purcell R."/>
            <person name="Remmel B."/>
            <person name="Rose M."/>
            <person name="Schlueter T."/>
            <person name="Simoes N."/>
            <person name="Tierrez A."/>
            <person name="Vazquez-Boland J.-A."/>
            <person name="Voss H."/>
            <person name="Wehland J."/>
            <person name="Cossart P."/>
        </authorList>
    </citation>
    <scope>NUCLEOTIDE SEQUENCE [LARGE SCALE GENOMIC DNA]</scope>
    <source>
        <strain>ATCC BAA-679 / EGD-e</strain>
    </source>
</reference>
<reference key="2">
    <citation type="journal article" date="2005" name="J. Bacteriol.">
        <title>A multidomain fusion protein in Listeria monocytogenes catalyzes the two primary activities for glutathione biosynthesis.</title>
        <authorList>
            <person name="Gopal S."/>
            <person name="Borovok I."/>
            <person name="Ofer A."/>
            <person name="Yanku M."/>
            <person name="Cohen G."/>
            <person name="Goebel W."/>
            <person name="Kreft J."/>
            <person name="Aharonowitz Y."/>
        </authorList>
    </citation>
    <scope>CHARACTERIZATION</scope>
    <source>
        <strain>ATCC BAA-679 / EGD-e</strain>
    </source>
</reference>
<accession>Q8Y3R3</accession>